<organism>
    <name type="scientific">Bacillus cytotoxicus (strain DSM 22905 / CIP 110041 / 391-98 / NVH 391-98)</name>
    <dbReference type="NCBI Taxonomy" id="315749"/>
    <lineage>
        <taxon>Bacteria</taxon>
        <taxon>Bacillati</taxon>
        <taxon>Bacillota</taxon>
        <taxon>Bacilli</taxon>
        <taxon>Bacillales</taxon>
        <taxon>Bacillaceae</taxon>
        <taxon>Bacillus</taxon>
        <taxon>Bacillus cereus group</taxon>
    </lineage>
</organism>
<dbReference type="EC" id="2.5.1.75" evidence="1"/>
<dbReference type="EMBL" id="CP000764">
    <property type="protein sequence ID" value="ABS22629.1"/>
    <property type="molecule type" value="Genomic_DNA"/>
</dbReference>
<dbReference type="RefSeq" id="WP_012094826.1">
    <property type="nucleotide sequence ID" value="NC_009674.1"/>
</dbReference>
<dbReference type="SMR" id="A7GR71"/>
<dbReference type="STRING" id="315749.Bcer98_2391"/>
<dbReference type="GeneID" id="33897650"/>
<dbReference type="KEGG" id="bcy:Bcer98_2391"/>
<dbReference type="eggNOG" id="COG0324">
    <property type="taxonomic scope" value="Bacteria"/>
</dbReference>
<dbReference type="HOGENOM" id="CLU_032616_0_1_9"/>
<dbReference type="OrthoDB" id="9776390at2"/>
<dbReference type="Proteomes" id="UP000002300">
    <property type="component" value="Chromosome"/>
</dbReference>
<dbReference type="GO" id="GO:0005524">
    <property type="term" value="F:ATP binding"/>
    <property type="evidence" value="ECO:0007669"/>
    <property type="project" value="UniProtKB-UniRule"/>
</dbReference>
<dbReference type="GO" id="GO:0052381">
    <property type="term" value="F:tRNA dimethylallyltransferase activity"/>
    <property type="evidence" value="ECO:0007669"/>
    <property type="project" value="UniProtKB-UniRule"/>
</dbReference>
<dbReference type="GO" id="GO:0006400">
    <property type="term" value="P:tRNA modification"/>
    <property type="evidence" value="ECO:0007669"/>
    <property type="project" value="TreeGrafter"/>
</dbReference>
<dbReference type="FunFam" id="1.10.20.140:FF:000001">
    <property type="entry name" value="tRNA dimethylallyltransferase"/>
    <property type="match status" value="1"/>
</dbReference>
<dbReference type="Gene3D" id="1.10.20.140">
    <property type="match status" value="1"/>
</dbReference>
<dbReference type="Gene3D" id="3.40.50.300">
    <property type="entry name" value="P-loop containing nucleotide triphosphate hydrolases"/>
    <property type="match status" value="1"/>
</dbReference>
<dbReference type="HAMAP" id="MF_00185">
    <property type="entry name" value="IPP_trans"/>
    <property type="match status" value="1"/>
</dbReference>
<dbReference type="InterPro" id="IPR039657">
    <property type="entry name" value="Dimethylallyltransferase"/>
</dbReference>
<dbReference type="InterPro" id="IPR018022">
    <property type="entry name" value="IPT"/>
</dbReference>
<dbReference type="InterPro" id="IPR027417">
    <property type="entry name" value="P-loop_NTPase"/>
</dbReference>
<dbReference type="NCBIfam" id="TIGR00174">
    <property type="entry name" value="miaA"/>
    <property type="match status" value="1"/>
</dbReference>
<dbReference type="PANTHER" id="PTHR11088">
    <property type="entry name" value="TRNA DIMETHYLALLYLTRANSFERASE"/>
    <property type="match status" value="1"/>
</dbReference>
<dbReference type="PANTHER" id="PTHR11088:SF60">
    <property type="entry name" value="TRNA DIMETHYLALLYLTRANSFERASE"/>
    <property type="match status" value="1"/>
</dbReference>
<dbReference type="Pfam" id="PF01715">
    <property type="entry name" value="IPPT"/>
    <property type="match status" value="1"/>
</dbReference>
<dbReference type="SUPFAM" id="SSF52540">
    <property type="entry name" value="P-loop containing nucleoside triphosphate hydrolases"/>
    <property type="match status" value="2"/>
</dbReference>
<protein>
    <recommendedName>
        <fullName evidence="1">tRNA dimethylallyltransferase</fullName>
        <ecNumber evidence="1">2.5.1.75</ecNumber>
    </recommendedName>
    <alternativeName>
        <fullName evidence="1">Dimethylallyl diphosphate:tRNA dimethylallyltransferase</fullName>
        <shortName evidence="1">DMAPP:tRNA dimethylallyltransferase</shortName>
        <shortName evidence="1">DMATase</shortName>
    </alternativeName>
    <alternativeName>
        <fullName evidence="1">Isopentenyl-diphosphate:tRNA isopentenyltransferase</fullName>
        <shortName evidence="1">IPP transferase</shortName>
        <shortName evidence="1">IPPT</shortName>
        <shortName evidence="1">IPTase</shortName>
    </alternativeName>
</protein>
<feature type="chain" id="PRO_1000077385" description="tRNA dimethylallyltransferase">
    <location>
        <begin position="1"/>
        <end position="316"/>
    </location>
</feature>
<feature type="region of interest" description="Interaction with substrate tRNA" evidence="1">
    <location>
        <begin position="39"/>
        <end position="42"/>
    </location>
</feature>
<feature type="binding site" evidence="1">
    <location>
        <begin position="14"/>
        <end position="21"/>
    </location>
    <ligand>
        <name>ATP</name>
        <dbReference type="ChEBI" id="CHEBI:30616"/>
    </ligand>
</feature>
<feature type="binding site" evidence="1">
    <location>
        <begin position="16"/>
        <end position="21"/>
    </location>
    <ligand>
        <name>substrate</name>
    </ligand>
</feature>
<feature type="site" description="Interaction with substrate tRNA" evidence="1">
    <location>
        <position position="105"/>
    </location>
</feature>
<feature type="site" description="Interaction with substrate tRNA" evidence="1">
    <location>
        <position position="128"/>
    </location>
</feature>
<accession>A7GR71</accession>
<reference key="1">
    <citation type="journal article" date="2008" name="Chem. Biol. Interact.">
        <title>Extending the Bacillus cereus group genomics to putative food-borne pathogens of different toxicity.</title>
        <authorList>
            <person name="Lapidus A."/>
            <person name="Goltsman E."/>
            <person name="Auger S."/>
            <person name="Galleron N."/>
            <person name="Segurens B."/>
            <person name="Dossat C."/>
            <person name="Land M.L."/>
            <person name="Broussolle V."/>
            <person name="Brillard J."/>
            <person name="Guinebretiere M.-H."/>
            <person name="Sanchis V."/>
            <person name="Nguen-the C."/>
            <person name="Lereclus D."/>
            <person name="Richardson P."/>
            <person name="Wincker P."/>
            <person name="Weissenbach J."/>
            <person name="Ehrlich S.D."/>
            <person name="Sorokin A."/>
        </authorList>
    </citation>
    <scope>NUCLEOTIDE SEQUENCE [LARGE SCALE GENOMIC DNA]</scope>
    <source>
        <strain>DSM 22905 / CIP 110041 / 391-98 / NVH 391-98</strain>
    </source>
</reference>
<evidence type="ECO:0000255" key="1">
    <source>
        <dbReference type="HAMAP-Rule" id="MF_00185"/>
    </source>
</evidence>
<sequence>MEEKQREKVVVIIGPTAVGKTKLSIELAKALNGEIVSGDSMQIYRTMDIGTAKVTADEMEGIPHYMIDIKDPEDSFSVAEFQELVRGHIREITKRGKLPIIVGGTGLYIQSVLYDYQFTDEAGDTAYRERMEKLAEEQGVEFVHKKLEEVDPESAKRIHANNVRRVIRALEIFQTTGKKMSEQLEKQKNELLYDVVLIGLTMDRTMLYDRINLRVDLMMEQGLEQEVKRLYQNGVRDCQSIQAIGYKELYRYFAGATSLEEAISQLKTNSRRYAKRQLTWFRNKMDVAWFDVTDGEKTAEILRYIEGKLQLKSNNN</sequence>
<keyword id="KW-0067">ATP-binding</keyword>
<keyword id="KW-0460">Magnesium</keyword>
<keyword id="KW-0547">Nucleotide-binding</keyword>
<keyword id="KW-0808">Transferase</keyword>
<keyword id="KW-0819">tRNA processing</keyword>
<proteinExistence type="inferred from homology"/>
<gene>
    <name evidence="1" type="primary">miaA</name>
    <name type="ordered locus">Bcer98_2391</name>
</gene>
<comment type="function">
    <text evidence="1">Catalyzes the transfer of a dimethylallyl group onto the adenine at position 37 in tRNAs that read codons beginning with uridine, leading to the formation of N6-(dimethylallyl)adenosine (i(6)A).</text>
</comment>
<comment type="catalytic activity">
    <reaction evidence="1">
        <text>adenosine(37) in tRNA + dimethylallyl diphosphate = N(6)-dimethylallyladenosine(37) in tRNA + diphosphate</text>
        <dbReference type="Rhea" id="RHEA:26482"/>
        <dbReference type="Rhea" id="RHEA-COMP:10162"/>
        <dbReference type="Rhea" id="RHEA-COMP:10375"/>
        <dbReference type="ChEBI" id="CHEBI:33019"/>
        <dbReference type="ChEBI" id="CHEBI:57623"/>
        <dbReference type="ChEBI" id="CHEBI:74411"/>
        <dbReference type="ChEBI" id="CHEBI:74415"/>
        <dbReference type="EC" id="2.5.1.75"/>
    </reaction>
</comment>
<comment type="cofactor">
    <cofactor evidence="1">
        <name>Mg(2+)</name>
        <dbReference type="ChEBI" id="CHEBI:18420"/>
    </cofactor>
</comment>
<comment type="subunit">
    <text evidence="1">Monomer.</text>
</comment>
<comment type="similarity">
    <text evidence="1">Belongs to the IPP transferase family.</text>
</comment>
<name>MIAA_BACCN</name>